<keyword id="KW-0963">Cytoplasm</keyword>
<keyword id="KW-0342">GTP-binding</keyword>
<keyword id="KW-0436">Ligase</keyword>
<keyword id="KW-0460">Magnesium</keyword>
<keyword id="KW-0479">Metal-binding</keyword>
<keyword id="KW-0547">Nucleotide-binding</keyword>
<keyword id="KW-0658">Purine biosynthesis</keyword>
<keyword id="KW-1185">Reference proteome</keyword>
<evidence type="ECO:0000250" key="1"/>
<evidence type="ECO:0000255" key="2">
    <source>
        <dbReference type="HAMAP-Rule" id="MF_03125"/>
    </source>
</evidence>
<protein>
    <recommendedName>
        <fullName evidence="2">Adenylosuccinate synthetase</fullName>
        <shortName evidence="2">AMPSase</shortName>
        <shortName evidence="2">AdSS</shortName>
        <ecNumber evidence="2">6.3.4.4</ecNumber>
    </recommendedName>
    <alternativeName>
        <fullName evidence="2">IMP--aspartate ligase</fullName>
    </alternativeName>
</protein>
<name>PURA_TALMQ</name>
<gene>
    <name type="ORF">PMAA_074670</name>
</gene>
<comment type="function">
    <text evidence="1">Plays an important role in the de novo pathway and in the salvage pathway of purine nucleotide biosynthesis. Catalyzes the first committed step in the biosynthesis of AMP from IMP (By similarity).</text>
</comment>
<comment type="catalytic activity">
    <reaction evidence="2">
        <text>IMP + L-aspartate + GTP = N(6)-(1,2-dicarboxyethyl)-AMP + GDP + phosphate + 2 H(+)</text>
        <dbReference type="Rhea" id="RHEA:15753"/>
        <dbReference type="ChEBI" id="CHEBI:15378"/>
        <dbReference type="ChEBI" id="CHEBI:29991"/>
        <dbReference type="ChEBI" id="CHEBI:37565"/>
        <dbReference type="ChEBI" id="CHEBI:43474"/>
        <dbReference type="ChEBI" id="CHEBI:57567"/>
        <dbReference type="ChEBI" id="CHEBI:58053"/>
        <dbReference type="ChEBI" id="CHEBI:58189"/>
        <dbReference type="EC" id="6.3.4.4"/>
    </reaction>
</comment>
<comment type="cofactor">
    <cofactor evidence="2">
        <name>Mg(2+)</name>
        <dbReference type="ChEBI" id="CHEBI:18420"/>
    </cofactor>
    <text evidence="2">Binds 1 Mg(2+) ion per subunit.</text>
</comment>
<comment type="pathway">
    <text evidence="2">Purine metabolism; AMP biosynthesis via de novo pathway; AMP from IMP: step 1/2.</text>
</comment>
<comment type="subunit">
    <text evidence="2">Homodimer.</text>
</comment>
<comment type="subcellular location">
    <subcellularLocation>
        <location evidence="2">Cytoplasm</location>
    </subcellularLocation>
</comment>
<comment type="similarity">
    <text evidence="2">Belongs to the adenylosuccinate synthetase family.</text>
</comment>
<proteinExistence type="inferred from homology"/>
<feature type="chain" id="PRO_0000399352" description="Adenylosuccinate synthetase">
    <location>
        <begin position="1"/>
        <end position="422"/>
    </location>
</feature>
<feature type="active site" description="Proton acceptor" evidence="2">
    <location>
        <position position="12"/>
    </location>
</feature>
<feature type="active site" description="Proton donor" evidence="2">
    <location>
        <position position="40"/>
    </location>
</feature>
<feature type="binding site" evidence="2">
    <location>
        <begin position="11"/>
        <end position="17"/>
    </location>
    <ligand>
        <name>GTP</name>
        <dbReference type="ChEBI" id="CHEBI:37565"/>
    </ligand>
</feature>
<feature type="binding site" description="in other chain" evidence="2">
    <location>
        <begin position="12"/>
        <end position="15"/>
    </location>
    <ligand>
        <name>IMP</name>
        <dbReference type="ChEBI" id="CHEBI:58053"/>
        <note>ligand shared between dimeric partners</note>
    </ligand>
</feature>
<feature type="binding site" evidence="2">
    <location>
        <position position="12"/>
    </location>
    <ligand>
        <name>Mg(2+)</name>
        <dbReference type="ChEBI" id="CHEBI:18420"/>
    </ligand>
</feature>
<feature type="binding site" description="in other chain" evidence="2">
    <location>
        <begin position="37"/>
        <end position="40"/>
    </location>
    <ligand>
        <name>IMP</name>
        <dbReference type="ChEBI" id="CHEBI:58053"/>
        <note>ligand shared between dimeric partners</note>
    </ligand>
</feature>
<feature type="binding site" evidence="2">
    <location>
        <begin position="39"/>
        <end position="41"/>
    </location>
    <ligand>
        <name>GTP</name>
        <dbReference type="ChEBI" id="CHEBI:37565"/>
    </ligand>
</feature>
<feature type="binding site" evidence="2">
    <location>
        <position position="39"/>
    </location>
    <ligand>
        <name>Mg(2+)</name>
        <dbReference type="ChEBI" id="CHEBI:18420"/>
    </ligand>
</feature>
<feature type="binding site" description="in other chain" evidence="2">
    <location>
        <position position="129"/>
    </location>
    <ligand>
        <name>IMP</name>
        <dbReference type="ChEBI" id="CHEBI:58053"/>
        <note>ligand shared between dimeric partners</note>
    </ligand>
</feature>
<feature type="binding site" evidence="2">
    <location>
        <position position="143"/>
    </location>
    <ligand>
        <name>IMP</name>
        <dbReference type="ChEBI" id="CHEBI:58053"/>
        <note>ligand shared between dimeric partners</note>
    </ligand>
</feature>
<feature type="binding site" description="in other chain" evidence="2">
    <location>
        <position position="219"/>
    </location>
    <ligand>
        <name>IMP</name>
        <dbReference type="ChEBI" id="CHEBI:58053"/>
        <note>ligand shared between dimeric partners</note>
    </ligand>
</feature>
<feature type="binding site" description="in other chain" evidence="2">
    <location>
        <position position="234"/>
    </location>
    <ligand>
        <name>IMP</name>
        <dbReference type="ChEBI" id="CHEBI:58053"/>
        <note>ligand shared between dimeric partners</note>
    </ligand>
</feature>
<feature type="binding site" evidence="2">
    <location>
        <begin position="294"/>
        <end position="300"/>
    </location>
    <ligand>
        <name>substrate</name>
    </ligand>
</feature>
<feature type="binding site" description="in other chain" evidence="2">
    <location>
        <position position="298"/>
    </location>
    <ligand>
        <name>IMP</name>
        <dbReference type="ChEBI" id="CHEBI:58053"/>
        <note>ligand shared between dimeric partners</note>
    </ligand>
</feature>
<feature type="binding site" evidence="2">
    <location>
        <position position="300"/>
    </location>
    <ligand>
        <name>GTP</name>
        <dbReference type="ChEBI" id="CHEBI:37565"/>
    </ligand>
</feature>
<feature type="binding site" evidence="2">
    <location>
        <begin position="326"/>
        <end position="328"/>
    </location>
    <ligand>
        <name>GTP</name>
        <dbReference type="ChEBI" id="CHEBI:37565"/>
    </ligand>
</feature>
<feature type="binding site" evidence="2">
    <location>
        <begin position="411"/>
        <end position="413"/>
    </location>
    <ligand>
        <name>GTP</name>
        <dbReference type="ChEBI" id="CHEBI:37565"/>
    </ligand>
</feature>
<dbReference type="EC" id="6.3.4.4" evidence="2"/>
<dbReference type="EMBL" id="DS995900">
    <property type="protein sequence ID" value="EEA26395.1"/>
    <property type="molecule type" value="Genomic_DNA"/>
</dbReference>
<dbReference type="RefSeq" id="XP_002146942.1">
    <property type="nucleotide sequence ID" value="XM_002146906.1"/>
</dbReference>
<dbReference type="SMR" id="B6QB86"/>
<dbReference type="STRING" id="441960.B6QB86"/>
<dbReference type="VEuPathDB" id="FungiDB:PMAA_074670"/>
<dbReference type="HOGENOM" id="CLU_029848_3_2_1"/>
<dbReference type="OrthoDB" id="486at28568"/>
<dbReference type="PhylomeDB" id="B6QB86"/>
<dbReference type="UniPathway" id="UPA00075">
    <property type="reaction ID" value="UER00335"/>
</dbReference>
<dbReference type="Proteomes" id="UP000001294">
    <property type="component" value="Unassembled WGS sequence"/>
</dbReference>
<dbReference type="GO" id="GO:0005737">
    <property type="term" value="C:cytoplasm"/>
    <property type="evidence" value="ECO:0007669"/>
    <property type="project" value="UniProtKB-SubCell"/>
</dbReference>
<dbReference type="GO" id="GO:0004019">
    <property type="term" value="F:adenylosuccinate synthase activity"/>
    <property type="evidence" value="ECO:0007669"/>
    <property type="project" value="UniProtKB-UniRule"/>
</dbReference>
<dbReference type="GO" id="GO:0005525">
    <property type="term" value="F:GTP binding"/>
    <property type="evidence" value="ECO:0007669"/>
    <property type="project" value="UniProtKB-UniRule"/>
</dbReference>
<dbReference type="GO" id="GO:0000287">
    <property type="term" value="F:magnesium ion binding"/>
    <property type="evidence" value="ECO:0007669"/>
    <property type="project" value="UniProtKB-UniRule"/>
</dbReference>
<dbReference type="GO" id="GO:0044208">
    <property type="term" value="P:'de novo' AMP biosynthetic process"/>
    <property type="evidence" value="ECO:0007669"/>
    <property type="project" value="UniProtKB-UniRule"/>
</dbReference>
<dbReference type="GO" id="GO:0046040">
    <property type="term" value="P:IMP metabolic process"/>
    <property type="evidence" value="ECO:0007669"/>
    <property type="project" value="TreeGrafter"/>
</dbReference>
<dbReference type="CDD" id="cd03108">
    <property type="entry name" value="AdSS"/>
    <property type="match status" value="1"/>
</dbReference>
<dbReference type="FunFam" id="3.90.170.10:FF:000001">
    <property type="entry name" value="Adenylosuccinate synthetase"/>
    <property type="match status" value="1"/>
</dbReference>
<dbReference type="FunFam" id="1.10.300.10:FF:000002">
    <property type="entry name" value="Adenylosuccinate synthetase, chloroplastic"/>
    <property type="match status" value="1"/>
</dbReference>
<dbReference type="Gene3D" id="3.40.440.10">
    <property type="entry name" value="Adenylosuccinate Synthetase, subunit A, domain 1"/>
    <property type="match status" value="1"/>
</dbReference>
<dbReference type="Gene3D" id="1.10.300.10">
    <property type="entry name" value="Adenylosuccinate Synthetase, subunit A, domain 2"/>
    <property type="match status" value="1"/>
</dbReference>
<dbReference type="Gene3D" id="3.90.170.10">
    <property type="entry name" value="Adenylosuccinate Synthetase, subunit A, domain 3"/>
    <property type="match status" value="1"/>
</dbReference>
<dbReference type="HAMAP" id="MF_00011">
    <property type="entry name" value="Adenylosucc_synth"/>
    <property type="match status" value="1"/>
</dbReference>
<dbReference type="InterPro" id="IPR018220">
    <property type="entry name" value="Adenylosuccin_syn_GTP-bd"/>
</dbReference>
<dbReference type="InterPro" id="IPR033128">
    <property type="entry name" value="Adenylosuccin_syn_Lys_AS"/>
</dbReference>
<dbReference type="InterPro" id="IPR042109">
    <property type="entry name" value="Adenylosuccinate_synth_dom1"/>
</dbReference>
<dbReference type="InterPro" id="IPR042110">
    <property type="entry name" value="Adenylosuccinate_synth_dom2"/>
</dbReference>
<dbReference type="InterPro" id="IPR042111">
    <property type="entry name" value="Adenylosuccinate_synth_dom3"/>
</dbReference>
<dbReference type="InterPro" id="IPR001114">
    <property type="entry name" value="Adenylosuccinate_synthetase"/>
</dbReference>
<dbReference type="InterPro" id="IPR027417">
    <property type="entry name" value="P-loop_NTPase"/>
</dbReference>
<dbReference type="NCBIfam" id="NF002223">
    <property type="entry name" value="PRK01117.1"/>
    <property type="match status" value="1"/>
</dbReference>
<dbReference type="NCBIfam" id="TIGR00184">
    <property type="entry name" value="purA"/>
    <property type="match status" value="1"/>
</dbReference>
<dbReference type="PANTHER" id="PTHR11846">
    <property type="entry name" value="ADENYLOSUCCINATE SYNTHETASE"/>
    <property type="match status" value="1"/>
</dbReference>
<dbReference type="PANTHER" id="PTHR11846:SF0">
    <property type="entry name" value="ADENYLOSUCCINATE SYNTHETASE"/>
    <property type="match status" value="1"/>
</dbReference>
<dbReference type="Pfam" id="PF00709">
    <property type="entry name" value="Adenylsucc_synt"/>
    <property type="match status" value="1"/>
</dbReference>
<dbReference type="SMART" id="SM00788">
    <property type="entry name" value="Adenylsucc_synt"/>
    <property type="match status" value="1"/>
</dbReference>
<dbReference type="SUPFAM" id="SSF52540">
    <property type="entry name" value="P-loop containing nucleoside triphosphate hydrolases"/>
    <property type="match status" value="1"/>
</dbReference>
<dbReference type="PROSITE" id="PS01266">
    <property type="entry name" value="ADENYLOSUCCIN_SYN_1"/>
    <property type="match status" value="1"/>
</dbReference>
<dbReference type="PROSITE" id="PS00513">
    <property type="entry name" value="ADENYLOSUCCIN_SYN_2"/>
    <property type="match status" value="1"/>
</dbReference>
<reference key="1">
    <citation type="journal article" date="2015" name="Genome Announc.">
        <title>Genome sequence of the AIDS-associated pathogen Penicillium marneffei (ATCC18224) and its near taxonomic relative Talaromyces stipitatus (ATCC10500).</title>
        <authorList>
            <person name="Nierman W.C."/>
            <person name="Fedorova-Abrams N.D."/>
            <person name="Andrianopoulos A."/>
        </authorList>
    </citation>
    <scope>NUCLEOTIDE SEQUENCE [LARGE SCALE GENOMIC DNA]</scope>
    <source>
        <strain>ATCC 18224 / CBS 334.59 / QM 7333</strain>
    </source>
</reference>
<accession>B6QB86</accession>
<sequence>MVTIVLGSQWGDEGKGKITDYLSQDATLCCRAAGGHNAGHTIVHDSVTYDFHILPSGLVSPKCINLIGAGTVVHIPSFFKELGALAEKGLVDADKRIFISDRAHVCFDLHSVVDGLEEAKLGGRKVGTTGKGIGPCYSDKAARRGVRVGEILDEEVFERKLRNLHSGYRNRFGELAYDVEEEINRFKEYRQKLKPYIIDQLPFLQKYKNDDRILVEGANALLLDLDHGTYPYVTSSSTGLGGAIQGLSINPTKIKNIIGVVKAYTTRVGSGPFPTEQLNEFGEKLQVTGREFGVTTGRKRRCGWFDLVLCRYSLAVNHYTALNLTKLDILDDFDEIKVAVAYKLPDGTRLESSYPADAGVIEKLEVEYVTLPGWKSNTMGLTKYEDLPENARKYVEYIEKGLDGVPIKWIGTGPAREHLIIR</sequence>
<organism>
    <name type="scientific">Talaromyces marneffei (strain ATCC 18224 / CBS 334.59 / QM 7333)</name>
    <name type="common">Penicillium marneffei</name>
    <dbReference type="NCBI Taxonomy" id="441960"/>
    <lineage>
        <taxon>Eukaryota</taxon>
        <taxon>Fungi</taxon>
        <taxon>Dikarya</taxon>
        <taxon>Ascomycota</taxon>
        <taxon>Pezizomycotina</taxon>
        <taxon>Eurotiomycetes</taxon>
        <taxon>Eurotiomycetidae</taxon>
        <taxon>Eurotiales</taxon>
        <taxon>Trichocomaceae</taxon>
        <taxon>Talaromyces</taxon>
        <taxon>Talaromyces sect. Talaromyces</taxon>
    </lineage>
</organism>